<dbReference type="EC" id="2.5.1.61" evidence="1"/>
<dbReference type="EMBL" id="CP000094">
    <property type="protein sequence ID" value="ABA77224.1"/>
    <property type="molecule type" value="Genomic_DNA"/>
</dbReference>
<dbReference type="RefSeq" id="WP_011336515.1">
    <property type="nucleotide sequence ID" value="NC_007492.2"/>
</dbReference>
<dbReference type="SMR" id="Q3K4T0"/>
<dbReference type="KEGG" id="pfo:Pfl01_5487"/>
<dbReference type="eggNOG" id="COG0181">
    <property type="taxonomic scope" value="Bacteria"/>
</dbReference>
<dbReference type="HOGENOM" id="CLU_019704_0_2_6"/>
<dbReference type="UniPathway" id="UPA00251">
    <property type="reaction ID" value="UER00319"/>
</dbReference>
<dbReference type="Proteomes" id="UP000002704">
    <property type="component" value="Chromosome"/>
</dbReference>
<dbReference type="GO" id="GO:0005737">
    <property type="term" value="C:cytoplasm"/>
    <property type="evidence" value="ECO:0007669"/>
    <property type="project" value="TreeGrafter"/>
</dbReference>
<dbReference type="GO" id="GO:0004418">
    <property type="term" value="F:hydroxymethylbilane synthase activity"/>
    <property type="evidence" value="ECO:0007669"/>
    <property type="project" value="UniProtKB-UniRule"/>
</dbReference>
<dbReference type="GO" id="GO:0006782">
    <property type="term" value="P:protoporphyrinogen IX biosynthetic process"/>
    <property type="evidence" value="ECO:0007669"/>
    <property type="project" value="UniProtKB-UniRule"/>
</dbReference>
<dbReference type="CDD" id="cd13646">
    <property type="entry name" value="PBP2_EcHMBS_like"/>
    <property type="match status" value="1"/>
</dbReference>
<dbReference type="FunFam" id="3.30.160.40:FF:000002">
    <property type="entry name" value="Porphobilinogen deaminase"/>
    <property type="match status" value="1"/>
</dbReference>
<dbReference type="FunFam" id="3.40.190.10:FF:000004">
    <property type="entry name" value="Porphobilinogen deaminase"/>
    <property type="match status" value="1"/>
</dbReference>
<dbReference type="FunFam" id="3.40.190.10:FF:000005">
    <property type="entry name" value="Porphobilinogen deaminase"/>
    <property type="match status" value="1"/>
</dbReference>
<dbReference type="Gene3D" id="3.40.190.10">
    <property type="entry name" value="Periplasmic binding protein-like II"/>
    <property type="match status" value="2"/>
</dbReference>
<dbReference type="Gene3D" id="3.30.160.40">
    <property type="entry name" value="Porphobilinogen deaminase, C-terminal domain"/>
    <property type="match status" value="1"/>
</dbReference>
<dbReference type="HAMAP" id="MF_00260">
    <property type="entry name" value="Porphobil_deam"/>
    <property type="match status" value="1"/>
</dbReference>
<dbReference type="InterPro" id="IPR000860">
    <property type="entry name" value="HemC"/>
</dbReference>
<dbReference type="InterPro" id="IPR022419">
    <property type="entry name" value="Porphobilin_deaminase_cofac_BS"/>
</dbReference>
<dbReference type="InterPro" id="IPR022417">
    <property type="entry name" value="Porphobilin_deaminase_N"/>
</dbReference>
<dbReference type="InterPro" id="IPR022418">
    <property type="entry name" value="Porphobilinogen_deaminase_C"/>
</dbReference>
<dbReference type="InterPro" id="IPR036803">
    <property type="entry name" value="Porphobilinogen_deaminase_C_sf"/>
</dbReference>
<dbReference type="NCBIfam" id="TIGR00212">
    <property type="entry name" value="hemC"/>
    <property type="match status" value="1"/>
</dbReference>
<dbReference type="PANTHER" id="PTHR11557">
    <property type="entry name" value="PORPHOBILINOGEN DEAMINASE"/>
    <property type="match status" value="1"/>
</dbReference>
<dbReference type="PANTHER" id="PTHR11557:SF0">
    <property type="entry name" value="PORPHOBILINOGEN DEAMINASE"/>
    <property type="match status" value="1"/>
</dbReference>
<dbReference type="Pfam" id="PF01379">
    <property type="entry name" value="Porphobil_deam"/>
    <property type="match status" value="1"/>
</dbReference>
<dbReference type="Pfam" id="PF03900">
    <property type="entry name" value="Porphobil_deamC"/>
    <property type="match status" value="1"/>
</dbReference>
<dbReference type="PIRSF" id="PIRSF001438">
    <property type="entry name" value="4pyrrol_synth_OHMeBilane_synth"/>
    <property type="match status" value="1"/>
</dbReference>
<dbReference type="PRINTS" id="PR00151">
    <property type="entry name" value="PORPHBDMNASE"/>
</dbReference>
<dbReference type="SUPFAM" id="SSF53850">
    <property type="entry name" value="Periplasmic binding protein-like II"/>
    <property type="match status" value="1"/>
</dbReference>
<dbReference type="SUPFAM" id="SSF54782">
    <property type="entry name" value="Porphobilinogen deaminase (hydroxymethylbilane synthase), C-terminal domain"/>
    <property type="match status" value="1"/>
</dbReference>
<dbReference type="PROSITE" id="PS00533">
    <property type="entry name" value="PORPHOBILINOGEN_DEAM"/>
    <property type="match status" value="1"/>
</dbReference>
<accession>Q3K4T0</accession>
<sequence>MSSREIRIATRKSALALWQAEYVKARLEAAHPGLLVTLVPMVSRGDKLLDSPLSKIGGKGLFVKELETALLENEADIAVHSMKDVPMDFPEGLGLFCICEREDPRDAFVSNTYSSLDALPAGSIVGTSSLRRQAQLLTRRPDLEIRFLRGNVNTRLAKLDAGEYDAIILAAAGLIRLGFEDRITSAISVDDSLPAGGQGAVGIECRSADTEIHALLAPLHHADTADRVTAERALNKHLNGGCQVPIACYAVLEGDQLWLRGLVGEPSGGKLLNAQARAPRAAAETLGVQVAEDLLSQGADDILKAVYGEAGHE</sequence>
<keyword id="KW-0627">Porphyrin biosynthesis</keyword>
<keyword id="KW-0808">Transferase</keyword>
<protein>
    <recommendedName>
        <fullName evidence="1">Porphobilinogen deaminase</fullName>
        <shortName evidence="1">PBG</shortName>
        <ecNumber evidence="1">2.5.1.61</ecNumber>
    </recommendedName>
    <alternativeName>
        <fullName evidence="1">Hydroxymethylbilane synthase</fullName>
        <shortName evidence="1">HMBS</shortName>
    </alternativeName>
    <alternativeName>
        <fullName evidence="1">Pre-uroporphyrinogen synthase</fullName>
    </alternativeName>
</protein>
<proteinExistence type="inferred from homology"/>
<organism>
    <name type="scientific">Pseudomonas fluorescens (strain Pf0-1)</name>
    <dbReference type="NCBI Taxonomy" id="205922"/>
    <lineage>
        <taxon>Bacteria</taxon>
        <taxon>Pseudomonadati</taxon>
        <taxon>Pseudomonadota</taxon>
        <taxon>Gammaproteobacteria</taxon>
        <taxon>Pseudomonadales</taxon>
        <taxon>Pseudomonadaceae</taxon>
        <taxon>Pseudomonas</taxon>
    </lineage>
</organism>
<gene>
    <name evidence="1" type="primary">hemC</name>
    <name type="ordered locus">Pfl01_5487</name>
</gene>
<comment type="function">
    <text evidence="1">Tetrapolymerization of the monopyrrole PBG into the hydroxymethylbilane pre-uroporphyrinogen in several discrete steps.</text>
</comment>
<comment type="catalytic activity">
    <reaction evidence="1">
        <text>4 porphobilinogen + H2O = hydroxymethylbilane + 4 NH4(+)</text>
        <dbReference type="Rhea" id="RHEA:13185"/>
        <dbReference type="ChEBI" id="CHEBI:15377"/>
        <dbReference type="ChEBI" id="CHEBI:28938"/>
        <dbReference type="ChEBI" id="CHEBI:57845"/>
        <dbReference type="ChEBI" id="CHEBI:58126"/>
        <dbReference type="EC" id="2.5.1.61"/>
    </reaction>
</comment>
<comment type="cofactor">
    <cofactor evidence="1">
        <name>dipyrromethane</name>
        <dbReference type="ChEBI" id="CHEBI:60342"/>
    </cofactor>
    <text evidence="1">Binds 1 dipyrromethane group covalently.</text>
</comment>
<comment type="pathway">
    <text evidence="1">Porphyrin-containing compound metabolism; protoporphyrin-IX biosynthesis; coproporphyrinogen-III from 5-aminolevulinate: step 2/4.</text>
</comment>
<comment type="subunit">
    <text evidence="1">Monomer.</text>
</comment>
<comment type="miscellaneous">
    <text evidence="1">The porphobilinogen subunits are added to the dipyrromethane group.</text>
</comment>
<comment type="similarity">
    <text evidence="1">Belongs to the HMBS family.</text>
</comment>
<reference key="1">
    <citation type="journal article" date="2009" name="Genome Biol.">
        <title>Genomic and genetic analyses of diversity and plant interactions of Pseudomonas fluorescens.</title>
        <authorList>
            <person name="Silby M.W."/>
            <person name="Cerdeno-Tarraga A.M."/>
            <person name="Vernikos G.S."/>
            <person name="Giddens S.R."/>
            <person name="Jackson R.W."/>
            <person name="Preston G.M."/>
            <person name="Zhang X.-X."/>
            <person name="Moon C.D."/>
            <person name="Gehrig S.M."/>
            <person name="Godfrey S.A.C."/>
            <person name="Knight C.G."/>
            <person name="Malone J.G."/>
            <person name="Robinson Z."/>
            <person name="Spiers A.J."/>
            <person name="Harris S."/>
            <person name="Challis G.L."/>
            <person name="Yaxley A.M."/>
            <person name="Harris D."/>
            <person name="Seeger K."/>
            <person name="Murphy L."/>
            <person name="Rutter S."/>
            <person name="Squares R."/>
            <person name="Quail M.A."/>
            <person name="Saunders E."/>
            <person name="Mavromatis K."/>
            <person name="Brettin T.S."/>
            <person name="Bentley S.D."/>
            <person name="Hothersall J."/>
            <person name="Stephens E."/>
            <person name="Thomas C.M."/>
            <person name="Parkhill J."/>
            <person name="Levy S.B."/>
            <person name="Rainey P.B."/>
            <person name="Thomson N.R."/>
        </authorList>
    </citation>
    <scope>NUCLEOTIDE SEQUENCE [LARGE SCALE GENOMIC DNA]</scope>
    <source>
        <strain>Pf0-1</strain>
    </source>
</reference>
<name>HEM3_PSEPF</name>
<feature type="chain" id="PRO_0000304268" description="Porphobilinogen deaminase">
    <location>
        <begin position="1"/>
        <end position="313"/>
    </location>
</feature>
<feature type="modified residue" description="S-(dipyrrolylmethanemethyl)cysteine" evidence="1">
    <location>
        <position position="242"/>
    </location>
</feature>
<evidence type="ECO:0000255" key="1">
    <source>
        <dbReference type="HAMAP-Rule" id="MF_00260"/>
    </source>
</evidence>